<comment type="function">
    <text evidence="1">An aminoacyl-tRNA editing enzyme that deacylates mischarged D-aminoacyl-tRNAs. Also deacylates mischarged glycyl-tRNA(Ala), protecting cells against glycine mischarging by AlaRS. Acts via tRNA-based rather than protein-based catalysis; rejects L-amino acids rather than detecting D-amino acids in the active site. By recycling D-aminoacyl-tRNA to D-amino acids and free tRNA molecules, this enzyme counteracts the toxicity associated with the formation of D-aminoacyl-tRNA entities in vivo and helps enforce protein L-homochirality.</text>
</comment>
<comment type="catalytic activity">
    <reaction evidence="1">
        <text>glycyl-tRNA(Ala) + H2O = tRNA(Ala) + glycine + H(+)</text>
        <dbReference type="Rhea" id="RHEA:53744"/>
        <dbReference type="Rhea" id="RHEA-COMP:9657"/>
        <dbReference type="Rhea" id="RHEA-COMP:13640"/>
        <dbReference type="ChEBI" id="CHEBI:15377"/>
        <dbReference type="ChEBI" id="CHEBI:15378"/>
        <dbReference type="ChEBI" id="CHEBI:57305"/>
        <dbReference type="ChEBI" id="CHEBI:78442"/>
        <dbReference type="ChEBI" id="CHEBI:78522"/>
        <dbReference type="EC" id="3.1.1.96"/>
    </reaction>
</comment>
<comment type="catalytic activity">
    <reaction evidence="1">
        <text>a D-aminoacyl-tRNA + H2O = a tRNA + a D-alpha-amino acid + H(+)</text>
        <dbReference type="Rhea" id="RHEA:13953"/>
        <dbReference type="Rhea" id="RHEA-COMP:10123"/>
        <dbReference type="Rhea" id="RHEA-COMP:10124"/>
        <dbReference type="ChEBI" id="CHEBI:15377"/>
        <dbReference type="ChEBI" id="CHEBI:15378"/>
        <dbReference type="ChEBI" id="CHEBI:59871"/>
        <dbReference type="ChEBI" id="CHEBI:78442"/>
        <dbReference type="ChEBI" id="CHEBI:79333"/>
        <dbReference type="EC" id="3.1.1.96"/>
    </reaction>
</comment>
<comment type="subunit">
    <text evidence="1">Homodimer.</text>
</comment>
<comment type="subcellular location">
    <subcellularLocation>
        <location evidence="1">Cytoplasm</location>
    </subcellularLocation>
</comment>
<comment type="domain">
    <text evidence="1">A Gly-cisPro motif from one monomer fits into the active site of the other monomer to allow specific chiral rejection of L-amino acids.</text>
</comment>
<comment type="similarity">
    <text evidence="2">Belongs to the DTD family.</text>
</comment>
<feature type="chain" id="PRO_0000164630" description="D-aminoacyl-tRNA deacylase">
    <location>
        <begin position="1"/>
        <end position="149"/>
    </location>
</feature>
<feature type="short sequence motif" description="Gly-cisPro motif, important for rejection of L-amino acids" evidence="1">
    <location>
        <begin position="139"/>
        <end position="140"/>
    </location>
</feature>
<name>DTD_CANGA</name>
<keyword id="KW-0963">Cytoplasm</keyword>
<keyword id="KW-0378">Hydrolase</keyword>
<keyword id="KW-1185">Reference proteome</keyword>
<keyword id="KW-0694">RNA-binding</keyword>
<keyword id="KW-0820">tRNA-binding</keyword>
<organism>
    <name type="scientific">Candida glabrata (strain ATCC 2001 / BCRC 20586 / JCM 3761 / NBRC 0622 / NRRL Y-65 / CBS 138)</name>
    <name type="common">Yeast</name>
    <name type="synonym">Nakaseomyces glabratus</name>
    <dbReference type="NCBI Taxonomy" id="284593"/>
    <lineage>
        <taxon>Eukaryota</taxon>
        <taxon>Fungi</taxon>
        <taxon>Dikarya</taxon>
        <taxon>Ascomycota</taxon>
        <taxon>Saccharomycotina</taxon>
        <taxon>Saccharomycetes</taxon>
        <taxon>Saccharomycetales</taxon>
        <taxon>Saccharomycetaceae</taxon>
        <taxon>Nakaseomyces</taxon>
    </lineage>
</organism>
<evidence type="ECO:0000250" key="1">
    <source>
        <dbReference type="UniProtKB" id="Q8IIS0"/>
    </source>
</evidence>
<evidence type="ECO:0000305" key="2"/>
<reference key="1">
    <citation type="journal article" date="2004" name="Nature">
        <title>Genome evolution in yeasts.</title>
        <authorList>
            <person name="Dujon B."/>
            <person name="Sherman D."/>
            <person name="Fischer G."/>
            <person name="Durrens P."/>
            <person name="Casaregola S."/>
            <person name="Lafontaine I."/>
            <person name="de Montigny J."/>
            <person name="Marck C."/>
            <person name="Neuveglise C."/>
            <person name="Talla E."/>
            <person name="Goffard N."/>
            <person name="Frangeul L."/>
            <person name="Aigle M."/>
            <person name="Anthouard V."/>
            <person name="Babour A."/>
            <person name="Barbe V."/>
            <person name="Barnay S."/>
            <person name="Blanchin S."/>
            <person name="Beckerich J.-M."/>
            <person name="Beyne E."/>
            <person name="Bleykasten C."/>
            <person name="Boisrame A."/>
            <person name="Boyer J."/>
            <person name="Cattolico L."/>
            <person name="Confanioleri F."/>
            <person name="de Daruvar A."/>
            <person name="Despons L."/>
            <person name="Fabre E."/>
            <person name="Fairhead C."/>
            <person name="Ferry-Dumazet H."/>
            <person name="Groppi A."/>
            <person name="Hantraye F."/>
            <person name="Hennequin C."/>
            <person name="Jauniaux N."/>
            <person name="Joyet P."/>
            <person name="Kachouri R."/>
            <person name="Kerrest A."/>
            <person name="Koszul R."/>
            <person name="Lemaire M."/>
            <person name="Lesur I."/>
            <person name="Ma L."/>
            <person name="Muller H."/>
            <person name="Nicaud J.-M."/>
            <person name="Nikolski M."/>
            <person name="Oztas S."/>
            <person name="Ozier-Kalogeropoulos O."/>
            <person name="Pellenz S."/>
            <person name="Potier S."/>
            <person name="Richard G.-F."/>
            <person name="Straub M.-L."/>
            <person name="Suleau A."/>
            <person name="Swennen D."/>
            <person name="Tekaia F."/>
            <person name="Wesolowski-Louvel M."/>
            <person name="Westhof E."/>
            <person name="Wirth B."/>
            <person name="Zeniou-Meyer M."/>
            <person name="Zivanovic Y."/>
            <person name="Bolotin-Fukuhara M."/>
            <person name="Thierry A."/>
            <person name="Bouchier C."/>
            <person name="Caudron B."/>
            <person name="Scarpelli C."/>
            <person name="Gaillardin C."/>
            <person name="Weissenbach J."/>
            <person name="Wincker P."/>
            <person name="Souciet J.-L."/>
        </authorList>
    </citation>
    <scope>NUCLEOTIDE SEQUENCE [LARGE SCALE GENOMIC DNA]</scope>
    <source>
        <strain>ATCC 2001 / BCRC 20586 / JCM 3761 / NBRC 0622 / NRRL Y-65 / CBS 138</strain>
    </source>
</reference>
<sequence>MRIVIQKVSQAMVKVDNEIVSQIAKGYMLLVGISTEDTIADAQKLSNKVLNLRLFETGDQFWKHSIQDVQGEILSVSQFTLMARTKKGNKPDFHKAQKGEHAQELYNQFLDLLKTTLGADKVKDGQFGAMMSCSLTNEGPVTIILDSTE</sequence>
<protein>
    <recommendedName>
        <fullName evidence="1">D-aminoacyl-tRNA deacylase</fullName>
        <shortName>DTD</shortName>
        <ecNumber evidence="1">3.1.1.96</ecNumber>
    </recommendedName>
    <alternativeName>
        <fullName evidence="1">Gly-tRNA(Ala) deacylase</fullName>
    </alternativeName>
</protein>
<proteinExistence type="inferred from homology"/>
<dbReference type="EC" id="3.1.1.96" evidence="1"/>
<dbReference type="EMBL" id="CR380953">
    <property type="protein sequence ID" value="CAG59532.1"/>
    <property type="molecule type" value="Genomic_DNA"/>
</dbReference>
<dbReference type="RefSeq" id="XP_446605.1">
    <property type="nucleotide sequence ID" value="XM_446605.1"/>
</dbReference>
<dbReference type="SMR" id="Q6FT39"/>
<dbReference type="FunCoup" id="Q6FT39">
    <property type="interactions" value="1672"/>
</dbReference>
<dbReference type="STRING" id="284593.Q6FT39"/>
<dbReference type="EnsemblFungi" id="CAGL0G05610g-T">
    <property type="protein sequence ID" value="CAGL0G05610g-T-p1"/>
    <property type="gene ID" value="CAGL0G05610g"/>
</dbReference>
<dbReference type="KEGG" id="cgr:2888282"/>
<dbReference type="CGD" id="CAL0130653">
    <property type="gene designation" value="CAGL0G05610g"/>
</dbReference>
<dbReference type="VEuPathDB" id="FungiDB:CAGL0G05610g"/>
<dbReference type="eggNOG" id="KOG3323">
    <property type="taxonomic scope" value="Eukaryota"/>
</dbReference>
<dbReference type="HOGENOM" id="CLU_076901_0_4_1"/>
<dbReference type="InParanoid" id="Q6FT39"/>
<dbReference type="Proteomes" id="UP000002428">
    <property type="component" value="Chromosome G"/>
</dbReference>
<dbReference type="GO" id="GO:0005737">
    <property type="term" value="C:cytoplasm"/>
    <property type="evidence" value="ECO:0007669"/>
    <property type="project" value="UniProtKB-SubCell"/>
</dbReference>
<dbReference type="GO" id="GO:0097358">
    <property type="term" value="F:D-leucyl-tRNA(Leu) deacylase activity"/>
    <property type="evidence" value="ECO:0007669"/>
    <property type="project" value="EnsemblFungi"/>
</dbReference>
<dbReference type="GO" id="GO:0051500">
    <property type="term" value="F:D-tyrosyl-tRNA(Tyr) deacylase activity"/>
    <property type="evidence" value="ECO:0007669"/>
    <property type="project" value="EnsemblFungi"/>
</dbReference>
<dbReference type="GO" id="GO:0000049">
    <property type="term" value="F:tRNA binding"/>
    <property type="evidence" value="ECO:0007669"/>
    <property type="project" value="UniProtKB-KW"/>
</dbReference>
<dbReference type="GO" id="GO:1900832">
    <property type="term" value="P:D-leucine catabolic process"/>
    <property type="evidence" value="ECO:0007669"/>
    <property type="project" value="EnsemblFungi"/>
</dbReference>
<dbReference type="GO" id="GO:1900829">
    <property type="term" value="P:D-tyrosine catabolic process"/>
    <property type="evidence" value="ECO:0007669"/>
    <property type="project" value="EnsemblFungi"/>
</dbReference>
<dbReference type="CDD" id="cd00563">
    <property type="entry name" value="Dtyr_deacylase"/>
    <property type="match status" value="1"/>
</dbReference>
<dbReference type="FunFam" id="3.50.80.10:FF:000001">
    <property type="entry name" value="D-aminoacyl-tRNA deacylase"/>
    <property type="match status" value="1"/>
</dbReference>
<dbReference type="Gene3D" id="3.50.80.10">
    <property type="entry name" value="D-tyrosyl-tRNA(Tyr) deacylase"/>
    <property type="match status" value="1"/>
</dbReference>
<dbReference type="HAMAP" id="MF_00518">
    <property type="entry name" value="Deacylase_Dtd"/>
    <property type="match status" value="1"/>
</dbReference>
<dbReference type="InterPro" id="IPR003732">
    <property type="entry name" value="Daa-tRNA_deacyls_DTD"/>
</dbReference>
<dbReference type="InterPro" id="IPR023509">
    <property type="entry name" value="DTD-like_sf"/>
</dbReference>
<dbReference type="NCBIfam" id="TIGR00256">
    <property type="entry name" value="D-aminoacyl-tRNA deacylase"/>
    <property type="match status" value="1"/>
</dbReference>
<dbReference type="PANTHER" id="PTHR10472:SF5">
    <property type="entry name" value="D-AMINOACYL-TRNA DEACYLASE 1"/>
    <property type="match status" value="1"/>
</dbReference>
<dbReference type="PANTHER" id="PTHR10472">
    <property type="entry name" value="D-TYROSYL-TRNA TYR DEACYLASE"/>
    <property type="match status" value="1"/>
</dbReference>
<dbReference type="Pfam" id="PF02580">
    <property type="entry name" value="Tyr_Deacylase"/>
    <property type="match status" value="1"/>
</dbReference>
<dbReference type="SUPFAM" id="SSF69500">
    <property type="entry name" value="DTD-like"/>
    <property type="match status" value="1"/>
</dbReference>
<gene>
    <name type="primary">DTD1</name>
    <name type="ordered locus">CAGL0G05610g</name>
</gene>
<accession>Q6FT39</accession>